<comment type="function">
    <text evidence="1 2">Catalyzes the two-electron oxidation of bromide by hydrogen peroxide and generates hypobromite as a reactive intermediate which mediates the formation of sulfilimine cross-links between methionine and hydroxylysine residues within an uncross-linked collagen IV NC1 hexamer (By similarity). Plays a role in the attachment of tissues and in axonal guidance during early developmental stages (By similarity). May functionally antagonize the peroxidasin pxn-2 to maintain neuronal development (By similarity).</text>
</comment>
<comment type="catalytic activity">
    <reaction evidence="2">
        <text>L-lysyl-[collagen] + L-methionyl-[collagen] + H2O2 = [collagen]-L-lysyl-N-S-L-methionyl-[collagen] + 2 H2O + H(+)</text>
        <dbReference type="Rhea" id="RHEA:66020"/>
        <dbReference type="Rhea" id="RHEA-COMP:12751"/>
        <dbReference type="Rhea" id="RHEA-COMP:16949"/>
        <dbReference type="Rhea" id="RHEA-COMP:16951"/>
        <dbReference type="ChEBI" id="CHEBI:15377"/>
        <dbReference type="ChEBI" id="CHEBI:15378"/>
        <dbReference type="ChEBI" id="CHEBI:16044"/>
        <dbReference type="ChEBI" id="CHEBI:16240"/>
        <dbReference type="ChEBI" id="CHEBI:29969"/>
        <dbReference type="ChEBI" id="CHEBI:166867"/>
    </reaction>
    <physiologicalReaction direction="left-to-right" evidence="2">
        <dbReference type="Rhea" id="RHEA:66021"/>
    </physiologicalReaction>
</comment>
<comment type="catalytic activity">
    <reaction evidence="2">
        <text>bromide + H2O2 = hypobromite + H2O</text>
        <dbReference type="Rhea" id="RHEA:66016"/>
        <dbReference type="ChEBI" id="CHEBI:15377"/>
        <dbReference type="ChEBI" id="CHEBI:15858"/>
        <dbReference type="ChEBI" id="CHEBI:16240"/>
        <dbReference type="ChEBI" id="CHEBI:29250"/>
    </reaction>
    <physiologicalReaction direction="left-to-right" evidence="2">
        <dbReference type="Rhea" id="RHEA:66017"/>
    </physiologicalReaction>
</comment>
<comment type="catalytic activity">
    <reaction evidence="2">
        <text>L-lysyl-[collagen] + L-methionyl-[collagen] + hypobromite = [collagen]-L-lysyl-N-S-L-methionyl-[collagen] + bromide + H2O + H(+)</text>
        <dbReference type="Rhea" id="RHEA:66024"/>
        <dbReference type="Rhea" id="RHEA-COMP:12751"/>
        <dbReference type="Rhea" id="RHEA-COMP:16949"/>
        <dbReference type="Rhea" id="RHEA-COMP:16951"/>
        <dbReference type="ChEBI" id="CHEBI:15377"/>
        <dbReference type="ChEBI" id="CHEBI:15378"/>
        <dbReference type="ChEBI" id="CHEBI:15858"/>
        <dbReference type="ChEBI" id="CHEBI:16044"/>
        <dbReference type="ChEBI" id="CHEBI:29250"/>
        <dbReference type="ChEBI" id="CHEBI:29969"/>
        <dbReference type="ChEBI" id="CHEBI:166867"/>
    </reaction>
    <physiologicalReaction direction="left-to-right" evidence="2">
        <dbReference type="Rhea" id="RHEA:66025"/>
    </physiologicalReaction>
</comment>
<comment type="catalytic activity">
    <reaction evidence="2">
        <text>L-tyrosyl-[protein] + bromide + H2O2 + H(+) = 3-bromo-L-tyrosyl-[protein] + 2 H2O</text>
        <dbReference type="Rhea" id="RHEA:69360"/>
        <dbReference type="Rhea" id="RHEA-COMP:10136"/>
        <dbReference type="Rhea" id="RHEA-COMP:17686"/>
        <dbReference type="ChEBI" id="CHEBI:15377"/>
        <dbReference type="ChEBI" id="CHEBI:15378"/>
        <dbReference type="ChEBI" id="CHEBI:15858"/>
        <dbReference type="ChEBI" id="CHEBI:16240"/>
        <dbReference type="ChEBI" id="CHEBI:46858"/>
        <dbReference type="ChEBI" id="CHEBI:183512"/>
    </reaction>
    <physiologicalReaction direction="left-to-right" evidence="2">
        <dbReference type="Rhea" id="RHEA:69361"/>
    </physiologicalReaction>
</comment>
<comment type="catalytic activity">
    <reaction evidence="2">
        <text>hypobromite + L-tyrosyl-[protein] + H(+) = 3-bromo-L-tyrosyl-[protein] + H2O</text>
        <dbReference type="Rhea" id="RHEA:69356"/>
        <dbReference type="Rhea" id="RHEA-COMP:10136"/>
        <dbReference type="Rhea" id="RHEA-COMP:17686"/>
        <dbReference type="ChEBI" id="CHEBI:15377"/>
        <dbReference type="ChEBI" id="CHEBI:15378"/>
        <dbReference type="ChEBI" id="CHEBI:29250"/>
        <dbReference type="ChEBI" id="CHEBI:46858"/>
        <dbReference type="ChEBI" id="CHEBI:183512"/>
    </reaction>
    <physiologicalReaction direction="left-to-right" evidence="2">
        <dbReference type="Rhea" id="RHEA:69357"/>
    </physiologicalReaction>
</comment>
<comment type="cofactor">
    <cofactor evidence="5">
        <name>Ca(2+)</name>
        <dbReference type="ChEBI" id="CHEBI:29108"/>
    </cofactor>
    <text evidence="5">Binds 1 Ca(2+) ion per subunit.</text>
</comment>
<comment type="cofactor">
    <cofactor evidence="5">
        <name>heme b</name>
        <dbReference type="ChEBI" id="CHEBI:60344"/>
    </cofactor>
    <text evidence="5">Binds 1 heme b (iron(II)-protoporphyrin IX) group covalently per subunit.</text>
</comment>
<comment type="subcellular location">
    <subcellularLocation>
        <location evidence="1">Secreted</location>
        <location evidence="1">Extracellular space</location>
        <location evidence="1">Extracellular matrix</location>
    </subcellularLocation>
    <text evidence="1">Localizes to the extracellular space in between body wall muscle cells.</text>
</comment>
<comment type="similarity">
    <text evidence="5">Belongs to the peroxidase family. XPO subfamily.</text>
</comment>
<dbReference type="EC" id="1.11.2.-" evidence="2"/>
<dbReference type="EMBL" id="HE601420">
    <property type="protein sequence ID" value="CAP22730.3"/>
    <property type="molecule type" value="Genomic_DNA"/>
</dbReference>
<dbReference type="FunCoup" id="A8WQH2">
    <property type="interactions" value="316"/>
</dbReference>
<dbReference type="STRING" id="6238.A8WQH2"/>
<dbReference type="GlyCosmos" id="A8WQH2">
    <property type="glycosylation" value="4 sites, No reported glycans"/>
</dbReference>
<dbReference type="KEGG" id="cbr:CBG_01526"/>
<dbReference type="CTD" id="8577351"/>
<dbReference type="WormBase" id="CBG01526">
    <property type="protein sequence ID" value="CBP43088"/>
    <property type="gene ID" value="WBGene00024751"/>
    <property type="gene designation" value="Cbr-pxn-1"/>
</dbReference>
<dbReference type="eggNOG" id="KOG0619">
    <property type="taxonomic scope" value="Eukaryota"/>
</dbReference>
<dbReference type="eggNOG" id="KOG2408">
    <property type="taxonomic scope" value="Eukaryota"/>
</dbReference>
<dbReference type="HOGENOM" id="CLU_006087_0_0_1"/>
<dbReference type="InParanoid" id="A8WQH2"/>
<dbReference type="OMA" id="NCDCRWL"/>
<dbReference type="Proteomes" id="UP000008549">
    <property type="component" value="Unassembled WGS sequence"/>
</dbReference>
<dbReference type="GO" id="GO:0005615">
    <property type="term" value="C:extracellular space"/>
    <property type="evidence" value="ECO:0000318"/>
    <property type="project" value="GO_Central"/>
</dbReference>
<dbReference type="GO" id="GO:0020037">
    <property type="term" value="F:heme binding"/>
    <property type="evidence" value="ECO:0007669"/>
    <property type="project" value="InterPro"/>
</dbReference>
<dbReference type="GO" id="GO:0140825">
    <property type="term" value="F:lactoperoxidase activity"/>
    <property type="evidence" value="ECO:0007669"/>
    <property type="project" value="UniProtKB-EC"/>
</dbReference>
<dbReference type="GO" id="GO:0046872">
    <property type="term" value="F:metal ion binding"/>
    <property type="evidence" value="ECO:0007669"/>
    <property type="project" value="UniProtKB-KW"/>
</dbReference>
<dbReference type="GO" id="GO:0004601">
    <property type="term" value="F:peroxidase activity"/>
    <property type="evidence" value="ECO:0000318"/>
    <property type="project" value="GO_Central"/>
</dbReference>
<dbReference type="GO" id="GO:0042744">
    <property type="term" value="P:hydrogen peroxide catabolic process"/>
    <property type="evidence" value="ECO:0007669"/>
    <property type="project" value="UniProtKB-KW"/>
</dbReference>
<dbReference type="GO" id="GO:0006979">
    <property type="term" value="P:response to oxidative stress"/>
    <property type="evidence" value="ECO:0007669"/>
    <property type="project" value="InterPro"/>
</dbReference>
<dbReference type="CDD" id="cd09826">
    <property type="entry name" value="peroxidasin_like"/>
    <property type="match status" value="1"/>
</dbReference>
<dbReference type="FunFam" id="2.60.40.10:FF:001895">
    <property type="entry name" value="PeroXidasiN (Drosophila peroxidase) homolog"/>
    <property type="match status" value="1"/>
</dbReference>
<dbReference type="FunFam" id="1.10.640.10:FF:000001">
    <property type="entry name" value="Peroxidasin homolog"/>
    <property type="match status" value="1"/>
</dbReference>
<dbReference type="FunFam" id="3.80.10.10:FF:000928">
    <property type="entry name" value="Peroxidasin homolog"/>
    <property type="match status" value="1"/>
</dbReference>
<dbReference type="FunFam" id="2.60.40.10:FF:000299">
    <property type="entry name" value="protogenin isoform X2"/>
    <property type="match status" value="1"/>
</dbReference>
<dbReference type="Gene3D" id="1.10.640.10">
    <property type="entry name" value="Haem peroxidase domain superfamily, animal type"/>
    <property type="match status" value="1"/>
</dbReference>
<dbReference type="Gene3D" id="2.60.40.10">
    <property type="entry name" value="Immunoglobulins"/>
    <property type="match status" value="2"/>
</dbReference>
<dbReference type="Gene3D" id="3.80.10.10">
    <property type="entry name" value="Ribonuclease Inhibitor"/>
    <property type="match status" value="2"/>
</dbReference>
<dbReference type="InterPro" id="IPR000483">
    <property type="entry name" value="Cys-rich_flank_reg_C"/>
</dbReference>
<dbReference type="InterPro" id="IPR019791">
    <property type="entry name" value="Haem_peroxidase_animal"/>
</dbReference>
<dbReference type="InterPro" id="IPR010255">
    <property type="entry name" value="Haem_peroxidase_sf"/>
</dbReference>
<dbReference type="InterPro" id="IPR037120">
    <property type="entry name" value="Haem_peroxidase_sf_animal"/>
</dbReference>
<dbReference type="InterPro" id="IPR007110">
    <property type="entry name" value="Ig-like_dom"/>
</dbReference>
<dbReference type="InterPro" id="IPR036179">
    <property type="entry name" value="Ig-like_dom_sf"/>
</dbReference>
<dbReference type="InterPro" id="IPR013783">
    <property type="entry name" value="Ig-like_fold"/>
</dbReference>
<dbReference type="InterPro" id="IPR013098">
    <property type="entry name" value="Ig_I-set"/>
</dbReference>
<dbReference type="InterPro" id="IPR003599">
    <property type="entry name" value="Ig_sub"/>
</dbReference>
<dbReference type="InterPro" id="IPR003598">
    <property type="entry name" value="Ig_sub2"/>
</dbReference>
<dbReference type="InterPro" id="IPR001611">
    <property type="entry name" value="Leu-rich_rpt"/>
</dbReference>
<dbReference type="InterPro" id="IPR003591">
    <property type="entry name" value="Leu-rich_rpt_typical-subtyp"/>
</dbReference>
<dbReference type="InterPro" id="IPR032675">
    <property type="entry name" value="LRR_dom_sf"/>
</dbReference>
<dbReference type="InterPro" id="IPR000372">
    <property type="entry name" value="LRRNT"/>
</dbReference>
<dbReference type="InterPro" id="IPR034824">
    <property type="entry name" value="Peroxidasin_peroxidase"/>
</dbReference>
<dbReference type="PANTHER" id="PTHR11475">
    <property type="entry name" value="OXIDASE/PEROXIDASE"/>
    <property type="match status" value="1"/>
</dbReference>
<dbReference type="PANTHER" id="PTHR11475:SF58">
    <property type="entry name" value="PEROXIDASIN"/>
    <property type="match status" value="1"/>
</dbReference>
<dbReference type="Pfam" id="PF03098">
    <property type="entry name" value="An_peroxidase"/>
    <property type="match status" value="1"/>
</dbReference>
<dbReference type="Pfam" id="PF07679">
    <property type="entry name" value="I-set"/>
    <property type="match status" value="2"/>
</dbReference>
<dbReference type="Pfam" id="PF13855">
    <property type="entry name" value="LRR_8"/>
    <property type="match status" value="2"/>
</dbReference>
<dbReference type="PRINTS" id="PR00457">
    <property type="entry name" value="ANPEROXIDASE"/>
</dbReference>
<dbReference type="SMART" id="SM00409">
    <property type="entry name" value="IG"/>
    <property type="match status" value="2"/>
</dbReference>
<dbReference type="SMART" id="SM00408">
    <property type="entry name" value="IGc2"/>
    <property type="match status" value="2"/>
</dbReference>
<dbReference type="SMART" id="SM00369">
    <property type="entry name" value="LRR_TYP"/>
    <property type="match status" value="3"/>
</dbReference>
<dbReference type="SMART" id="SM00082">
    <property type="entry name" value="LRRCT"/>
    <property type="match status" value="1"/>
</dbReference>
<dbReference type="SMART" id="SM00013">
    <property type="entry name" value="LRRNT"/>
    <property type="match status" value="1"/>
</dbReference>
<dbReference type="SUPFAM" id="SSF48113">
    <property type="entry name" value="Heme-dependent peroxidases"/>
    <property type="match status" value="1"/>
</dbReference>
<dbReference type="SUPFAM" id="SSF48726">
    <property type="entry name" value="Immunoglobulin"/>
    <property type="match status" value="2"/>
</dbReference>
<dbReference type="SUPFAM" id="SSF52058">
    <property type="entry name" value="L domain-like"/>
    <property type="match status" value="1"/>
</dbReference>
<dbReference type="PROSITE" id="PS50835">
    <property type="entry name" value="IG_LIKE"/>
    <property type="match status" value="2"/>
</dbReference>
<dbReference type="PROSITE" id="PS51450">
    <property type="entry name" value="LRR"/>
    <property type="match status" value="5"/>
</dbReference>
<dbReference type="PROSITE" id="PS50292">
    <property type="entry name" value="PEROXIDASE_3"/>
    <property type="match status" value="1"/>
</dbReference>
<protein>
    <recommendedName>
        <fullName evidence="8">Peroxidasin homolog</fullName>
        <ecNumber evidence="2">1.11.2.-</ecNumber>
    </recommendedName>
</protein>
<evidence type="ECO:0000250" key="1">
    <source>
        <dbReference type="UniProtKB" id="Q1ENI8"/>
    </source>
</evidence>
<evidence type="ECO:0000250" key="2">
    <source>
        <dbReference type="UniProtKB" id="Q92626"/>
    </source>
</evidence>
<evidence type="ECO:0000255" key="3"/>
<evidence type="ECO:0000255" key="4">
    <source>
        <dbReference type="PROSITE-ProRule" id="PRU00114"/>
    </source>
</evidence>
<evidence type="ECO:0000255" key="5">
    <source>
        <dbReference type="PROSITE-ProRule" id="PRU00298"/>
    </source>
</evidence>
<evidence type="ECO:0000255" key="6">
    <source>
        <dbReference type="PROSITE-ProRule" id="PRU00498"/>
    </source>
</evidence>
<evidence type="ECO:0000256" key="7">
    <source>
        <dbReference type="SAM" id="MobiDB-lite"/>
    </source>
</evidence>
<evidence type="ECO:0000305" key="8"/>
<evidence type="ECO:0000312" key="9">
    <source>
        <dbReference type="WormBase" id="CBG01526"/>
    </source>
</evidence>
<accession>A8WQH2</accession>
<keyword id="KW-0106">Calcium</keyword>
<keyword id="KW-0175">Coiled coil</keyword>
<keyword id="KW-1015">Disulfide bond</keyword>
<keyword id="KW-0272">Extracellular matrix</keyword>
<keyword id="KW-0325">Glycoprotein</keyword>
<keyword id="KW-0349">Heme</keyword>
<keyword id="KW-0376">Hydrogen peroxide</keyword>
<keyword id="KW-0393">Immunoglobulin domain</keyword>
<keyword id="KW-0408">Iron</keyword>
<keyword id="KW-0433">Leucine-rich repeat</keyword>
<keyword id="KW-0479">Metal-binding</keyword>
<keyword id="KW-0560">Oxidoreductase</keyword>
<keyword id="KW-0575">Peroxidase</keyword>
<keyword id="KW-1185">Reference proteome</keyword>
<keyword id="KW-0677">Repeat</keyword>
<keyword id="KW-0964">Secreted</keyword>
<keyword id="KW-0732">Signal</keyword>
<organism>
    <name type="scientific">Caenorhabditis briggsae</name>
    <dbReference type="NCBI Taxonomy" id="6238"/>
    <lineage>
        <taxon>Eukaryota</taxon>
        <taxon>Metazoa</taxon>
        <taxon>Ecdysozoa</taxon>
        <taxon>Nematoda</taxon>
        <taxon>Chromadorea</taxon>
        <taxon>Rhabditida</taxon>
        <taxon>Rhabditina</taxon>
        <taxon>Rhabditomorpha</taxon>
        <taxon>Rhabditoidea</taxon>
        <taxon>Rhabditidae</taxon>
        <taxon>Peloderinae</taxon>
        <taxon>Caenorhabditis</taxon>
    </lineage>
</organism>
<proteinExistence type="inferred from homology"/>
<sequence>MNLLLYLLLLVPWVLGSEDGCPAKCTCDKKGFTVDCSNAGLTRIPKGISSNVRSLVLRNNRIHTLIKSDLEGFPLLESLVLTHNKIKVVEENILDHLPELKRLSLSHNLLVYIPPLASESRPLASLNLKRNHIQFIDERWLLQYFPELVQIDLSHNRIQSLRTKLFENLPSLTHAHLHANPWNCDCRVTKVKALLRKVEWERKAYCTNPVELRHQAIDEVEESLLKCAKPEEESWTGDEFKLVCTKNASSSRPVVWLYENAEVDSSSLDGYEIHDSVITVPRKTNVNQMTCTYDYEHVPHHRRLRQSHHSNGAPQFTYKPRDNSYREGSEVKVNCEVMGTPKPSITWYHNGVRFASSRKKQLGLSNNVLRIYPFLEEDSGRYTCEAVNSLGKVSHTFSLDLISSIPPNIYEGPQSVSQNIGGEVVFVCKAKGNPTPDYTWSFDGSTIGHIKGRFMVSDDGTELXISNIEKKDEGYYSCMAGNPVGAMSADAKLTVIGGETRKSSTPQIDEELLRAIAQKARQNVESAVEKTRKQLNQDKITNTNDLKRLFRFSTPKQAVELSKAREIYEESVRLVREHVEKGLILNVDELHPNNVSYESVLHVTHVQALMGLSGCHTGQFKNPCTDTCFHNKYRSFDGQCNNKNKPMNGVSLMPLRRLLKPVYENGFNTPVGWEKGKLYNGYPMPNVREVSRQLVATETITPHRKLSSMVMQWGQFVDHDLTHTVTALSRHSYATGAFCNRTCDNLDPCFNIPLSPSDPRVISESAKYPCIEFERSAAVCGSGETSLVFNRVTYREQMNALTSFLDASNVYGSNEVQAQELRDTYNNNGQLRYDITSAAGKEYLPFEKDSNMDCRRNFSEENPIRCFLAGDLRANEQLALAATHTIFVREHNRIAKKLKKMNGNWDGEVIYHETRKIIGAMMQHITFKHWLPVVFGGQEQMDKFVGKYQGYDPAIDSSVTNAFATAAFRFGHTIINPTLFRLGNDFMSIKQGHIALHKAFFTPELVLTEGGIDPLLRGLFASPLKHPMPTQLLNMELIEKLFMKGHEVSLDLAVMNIQRSRDHGLPSYTEYRQFCNLPVPARWEDMKGYIKDDMIIQKLRGLYGVPQNIDLWVGGIVEEKLENGLFGPTFACIIGEQFRKMRDGDRFWYEKDGVFTPEQMKEIKKVTLARLLCDNGDEIDRIQKDVFMYPGKEKENYGRCEDTEMMDLKAWSKCCDDVCPTMLDRILRSRHRGSRLHGCNQNGLWRPEGAKWIPPNEYCTEEAVFGAPPKKTVLTTEVHSSQRNSVLY</sequence>
<gene>
    <name evidence="9" type="primary">pxn-1</name>
    <name evidence="9" type="ORF">CBG01526</name>
</gene>
<name>PXDN1_CAEBR</name>
<feature type="signal peptide" evidence="3">
    <location>
        <begin position="1"/>
        <end position="16"/>
    </location>
</feature>
<feature type="chain" id="PRO_0000319622" description="Peroxidasin homolog">
    <location>
        <begin position="17"/>
        <end position="1288"/>
    </location>
</feature>
<feature type="domain" description="LRRNT">
    <location>
        <begin position="17"/>
        <end position="51"/>
    </location>
</feature>
<feature type="repeat" description="LRR 1" evidence="3">
    <location>
        <begin position="27"/>
        <end position="49"/>
    </location>
</feature>
<feature type="repeat" description="LRR 2" evidence="3">
    <location>
        <begin position="50"/>
        <end position="72"/>
    </location>
</feature>
<feature type="repeat" description="LRR 3" evidence="3">
    <location>
        <begin position="73"/>
        <end position="96"/>
    </location>
</feature>
<feature type="repeat" description="LRR 4" evidence="3">
    <location>
        <begin position="97"/>
        <end position="120"/>
    </location>
</feature>
<feature type="repeat" description="LRR 5" evidence="3">
    <location>
        <begin position="122"/>
        <end position="143"/>
    </location>
</feature>
<feature type="repeat" description="LRR 6" evidence="3">
    <location>
        <begin position="145"/>
        <end position="168"/>
    </location>
</feature>
<feature type="domain" description="LRRCT" evidence="3">
    <location>
        <begin position="180"/>
        <end position="228"/>
    </location>
</feature>
<feature type="repeat" description="LRR 7" evidence="3">
    <location>
        <begin position="204"/>
        <end position="227"/>
    </location>
</feature>
<feature type="domain" description="Ig-like C2-type 1" evidence="4">
    <location>
        <begin position="314"/>
        <end position="400"/>
    </location>
</feature>
<feature type="repeat" description="LRR 8" evidence="3">
    <location>
        <begin position="356"/>
        <end position="381"/>
    </location>
</feature>
<feature type="repeat" description="LRR 9" evidence="3">
    <location>
        <begin position="387"/>
        <end position="412"/>
    </location>
</feature>
<feature type="domain" description="Ig-like C2-type 2" evidence="4">
    <location>
        <begin position="407"/>
        <end position="494"/>
    </location>
</feature>
<feature type="repeat" description="LRR 10" evidence="3">
    <location>
        <begin position="998"/>
        <end position="1022"/>
    </location>
</feature>
<feature type="repeat" description="LRR 11" evidence="3">
    <location>
        <begin position="1049"/>
        <end position="1073"/>
    </location>
</feature>
<feature type="repeat" description="LRR 12" evidence="3">
    <location>
        <begin position="1168"/>
        <end position="1189"/>
    </location>
</feature>
<feature type="region of interest" description="Disordered" evidence="7">
    <location>
        <begin position="304"/>
        <end position="323"/>
    </location>
</feature>
<feature type="active site" description="Proton acceptor" evidence="5">
    <location>
        <position position="719"/>
    </location>
</feature>
<feature type="binding site" description="covalent" evidence="5">
    <location>
        <position position="718"/>
    </location>
    <ligand>
        <name>heme b</name>
        <dbReference type="ChEBI" id="CHEBI:60344"/>
    </ligand>
</feature>
<feature type="binding site" evidence="5">
    <location>
        <position position="720"/>
    </location>
    <ligand>
        <name>Ca(2+)</name>
        <dbReference type="ChEBI" id="CHEBI:29108"/>
    </ligand>
</feature>
<feature type="binding site" evidence="5">
    <location>
        <position position="802"/>
    </location>
    <ligand>
        <name>Ca(2+)</name>
        <dbReference type="ChEBI" id="CHEBI:29108"/>
    </ligand>
</feature>
<feature type="binding site" evidence="5">
    <location>
        <position position="804"/>
    </location>
    <ligand>
        <name>Ca(2+)</name>
        <dbReference type="ChEBI" id="CHEBI:29108"/>
    </ligand>
</feature>
<feature type="binding site" evidence="5">
    <location>
        <position position="806"/>
    </location>
    <ligand>
        <name>Ca(2+)</name>
        <dbReference type="ChEBI" id="CHEBI:29108"/>
    </ligand>
</feature>
<feature type="binding site" evidence="5">
    <location>
        <position position="808"/>
    </location>
    <ligand>
        <name>Ca(2+)</name>
        <dbReference type="ChEBI" id="CHEBI:29108"/>
    </ligand>
</feature>
<feature type="binding site" description="covalent" evidence="5">
    <location>
        <position position="876"/>
    </location>
    <ligand>
        <name>heme b</name>
        <dbReference type="ChEBI" id="CHEBI:60344"/>
    </ligand>
</feature>
<feature type="binding site" description="axial binding residue" evidence="5">
    <location>
        <position position="972"/>
    </location>
    <ligand>
        <name>heme b</name>
        <dbReference type="ChEBI" id="CHEBI:60344"/>
    </ligand>
    <ligandPart>
        <name>Fe</name>
        <dbReference type="ChEBI" id="CHEBI:18248"/>
    </ligandPart>
</feature>
<feature type="site" description="Transition state stabilizer" evidence="5">
    <location>
        <position position="873"/>
    </location>
</feature>
<feature type="glycosylation site" description="N-linked (GlcNAc...) asparagine" evidence="6">
    <location>
        <position position="247"/>
    </location>
</feature>
<feature type="glycosylation site" description="N-linked (GlcNAc...) asparagine" evidence="6">
    <location>
        <position position="594"/>
    </location>
</feature>
<feature type="glycosylation site" description="N-linked (GlcNAc...) asparagine" evidence="6">
    <location>
        <position position="740"/>
    </location>
</feature>
<feature type="glycosylation site" description="N-linked (GlcNAc...) asparagine" evidence="6">
    <location>
        <position position="857"/>
    </location>
</feature>
<feature type="disulfide bond" evidence="4">
    <location>
        <begin position="335"/>
        <end position="384"/>
    </location>
</feature>
<feature type="disulfide bond" evidence="4">
    <location>
        <begin position="428"/>
        <end position="478"/>
    </location>
</feature>
<feature type="disulfide bond" evidence="5">
    <location>
        <begin position="624"/>
        <end position="640"/>
    </location>
</feature>
<feature type="disulfide bond" evidence="5">
    <location>
        <begin position="739"/>
        <end position="749"/>
    </location>
</feature>
<feature type="disulfide bond" evidence="5">
    <location>
        <begin position="743"/>
        <end position="770"/>
    </location>
</feature>
<feature type="disulfide bond" evidence="5">
    <location>
        <begin position="1075"/>
        <end position="1132"/>
    </location>
</feature>
<feature type="disulfide bond" evidence="5">
    <location>
        <begin position="1173"/>
        <end position="1200"/>
    </location>
</feature>
<reference key="1">
    <citation type="journal article" date="2003" name="PLoS Biol.">
        <title>The genome sequence of Caenorhabditis briggsae: a platform for comparative genomics.</title>
        <authorList>
            <person name="Stein L.D."/>
            <person name="Bao Z."/>
            <person name="Blasiar D."/>
            <person name="Blumenthal T."/>
            <person name="Brent M.R."/>
            <person name="Chen N."/>
            <person name="Chinwalla A."/>
            <person name="Clarke L."/>
            <person name="Clee C."/>
            <person name="Coghlan A."/>
            <person name="Coulson A."/>
            <person name="D'Eustachio P."/>
            <person name="Fitch D.H.A."/>
            <person name="Fulton L.A."/>
            <person name="Fulton R.E."/>
            <person name="Griffiths-Jones S."/>
            <person name="Harris T.W."/>
            <person name="Hillier L.W."/>
            <person name="Kamath R."/>
            <person name="Kuwabara P.E."/>
            <person name="Mardis E.R."/>
            <person name="Marra M.A."/>
            <person name="Miner T.L."/>
            <person name="Minx P."/>
            <person name="Mullikin J.C."/>
            <person name="Plumb R.W."/>
            <person name="Rogers J."/>
            <person name="Schein J.E."/>
            <person name="Sohrmann M."/>
            <person name="Spieth J."/>
            <person name="Stajich J.E."/>
            <person name="Wei C."/>
            <person name="Willey D."/>
            <person name="Wilson R.K."/>
            <person name="Durbin R.M."/>
            <person name="Waterston R.H."/>
        </authorList>
    </citation>
    <scope>NUCLEOTIDE SEQUENCE [LARGE SCALE GENOMIC DNA]</scope>
    <source>
        <strain>AF16</strain>
    </source>
</reference>